<proteinExistence type="inferred from homology"/>
<organism>
    <name type="scientific">Streptococcus pneumoniae (strain 70585)</name>
    <dbReference type="NCBI Taxonomy" id="488221"/>
    <lineage>
        <taxon>Bacteria</taxon>
        <taxon>Bacillati</taxon>
        <taxon>Bacillota</taxon>
        <taxon>Bacilli</taxon>
        <taxon>Lactobacillales</taxon>
        <taxon>Streptococcaceae</taxon>
        <taxon>Streptococcus</taxon>
    </lineage>
</organism>
<comment type="function">
    <text evidence="1">Catalyzes the interconversion of L-alanine and D-alanine. May also act on other amino acids.</text>
</comment>
<comment type="catalytic activity">
    <reaction evidence="1">
        <text>L-alanine = D-alanine</text>
        <dbReference type="Rhea" id="RHEA:20249"/>
        <dbReference type="ChEBI" id="CHEBI:57416"/>
        <dbReference type="ChEBI" id="CHEBI:57972"/>
        <dbReference type="EC" id="5.1.1.1"/>
    </reaction>
</comment>
<comment type="cofactor">
    <cofactor evidence="1">
        <name>pyridoxal 5'-phosphate</name>
        <dbReference type="ChEBI" id="CHEBI:597326"/>
    </cofactor>
</comment>
<comment type="pathway">
    <text evidence="1">Amino-acid biosynthesis; D-alanine biosynthesis; D-alanine from L-alanine: step 1/1.</text>
</comment>
<comment type="similarity">
    <text evidence="1">Belongs to the alanine racemase family.</text>
</comment>
<evidence type="ECO:0000255" key="1">
    <source>
        <dbReference type="HAMAP-Rule" id="MF_01201"/>
    </source>
</evidence>
<gene>
    <name type="primary">alr</name>
    <name type="ordered locus">SP70585_1737</name>
</gene>
<protein>
    <recommendedName>
        <fullName evidence="1">Alanine racemase</fullName>
        <ecNumber evidence="1">5.1.1.1</ecNumber>
    </recommendedName>
</protein>
<accession>C1C8T6</accession>
<dbReference type="EC" id="5.1.1.1" evidence="1"/>
<dbReference type="EMBL" id="CP000918">
    <property type="protein sequence ID" value="ACO16672.1"/>
    <property type="molecule type" value="Genomic_DNA"/>
</dbReference>
<dbReference type="RefSeq" id="WP_000648087.1">
    <property type="nucleotide sequence ID" value="NC_012468.1"/>
</dbReference>
<dbReference type="SMR" id="C1C8T6"/>
<dbReference type="KEGG" id="snm:SP70585_1737"/>
<dbReference type="HOGENOM" id="CLU_028393_2_1_9"/>
<dbReference type="UniPathway" id="UPA00042">
    <property type="reaction ID" value="UER00497"/>
</dbReference>
<dbReference type="Proteomes" id="UP000002211">
    <property type="component" value="Chromosome"/>
</dbReference>
<dbReference type="GO" id="GO:0005829">
    <property type="term" value="C:cytosol"/>
    <property type="evidence" value="ECO:0007669"/>
    <property type="project" value="TreeGrafter"/>
</dbReference>
<dbReference type="GO" id="GO:0008784">
    <property type="term" value="F:alanine racemase activity"/>
    <property type="evidence" value="ECO:0007669"/>
    <property type="project" value="UniProtKB-UniRule"/>
</dbReference>
<dbReference type="GO" id="GO:0030170">
    <property type="term" value="F:pyridoxal phosphate binding"/>
    <property type="evidence" value="ECO:0007669"/>
    <property type="project" value="UniProtKB-UniRule"/>
</dbReference>
<dbReference type="GO" id="GO:0030632">
    <property type="term" value="P:D-alanine biosynthetic process"/>
    <property type="evidence" value="ECO:0007669"/>
    <property type="project" value="UniProtKB-UniRule"/>
</dbReference>
<dbReference type="GO" id="GO:0009252">
    <property type="term" value="P:peptidoglycan biosynthetic process"/>
    <property type="evidence" value="ECO:0007669"/>
    <property type="project" value="TreeGrafter"/>
</dbReference>
<dbReference type="CDD" id="cd00430">
    <property type="entry name" value="PLPDE_III_AR"/>
    <property type="match status" value="1"/>
</dbReference>
<dbReference type="FunFam" id="2.40.37.10:FF:000006">
    <property type="entry name" value="Alanine racemase"/>
    <property type="match status" value="1"/>
</dbReference>
<dbReference type="FunFam" id="3.20.20.10:FF:000002">
    <property type="entry name" value="Alanine racemase"/>
    <property type="match status" value="1"/>
</dbReference>
<dbReference type="Gene3D" id="3.20.20.10">
    <property type="entry name" value="Alanine racemase"/>
    <property type="match status" value="1"/>
</dbReference>
<dbReference type="Gene3D" id="2.40.37.10">
    <property type="entry name" value="Lyase, Ornithine Decarboxylase, Chain A, domain 1"/>
    <property type="match status" value="1"/>
</dbReference>
<dbReference type="HAMAP" id="MF_01201">
    <property type="entry name" value="Ala_racemase"/>
    <property type="match status" value="1"/>
</dbReference>
<dbReference type="InterPro" id="IPR000821">
    <property type="entry name" value="Ala_racemase"/>
</dbReference>
<dbReference type="InterPro" id="IPR009006">
    <property type="entry name" value="Ala_racemase/Decarboxylase_C"/>
</dbReference>
<dbReference type="InterPro" id="IPR011079">
    <property type="entry name" value="Ala_racemase_C"/>
</dbReference>
<dbReference type="InterPro" id="IPR001608">
    <property type="entry name" value="Ala_racemase_N"/>
</dbReference>
<dbReference type="InterPro" id="IPR020622">
    <property type="entry name" value="Ala_racemase_pyridoxalP-BS"/>
</dbReference>
<dbReference type="InterPro" id="IPR029066">
    <property type="entry name" value="PLP-binding_barrel"/>
</dbReference>
<dbReference type="NCBIfam" id="TIGR00492">
    <property type="entry name" value="alr"/>
    <property type="match status" value="1"/>
</dbReference>
<dbReference type="PANTHER" id="PTHR30511">
    <property type="entry name" value="ALANINE RACEMASE"/>
    <property type="match status" value="1"/>
</dbReference>
<dbReference type="PANTHER" id="PTHR30511:SF0">
    <property type="entry name" value="ALANINE RACEMASE, CATABOLIC-RELATED"/>
    <property type="match status" value="1"/>
</dbReference>
<dbReference type="Pfam" id="PF00842">
    <property type="entry name" value="Ala_racemase_C"/>
    <property type="match status" value="1"/>
</dbReference>
<dbReference type="Pfam" id="PF01168">
    <property type="entry name" value="Ala_racemase_N"/>
    <property type="match status" value="1"/>
</dbReference>
<dbReference type="PRINTS" id="PR00992">
    <property type="entry name" value="ALARACEMASE"/>
</dbReference>
<dbReference type="SMART" id="SM01005">
    <property type="entry name" value="Ala_racemase_C"/>
    <property type="match status" value="1"/>
</dbReference>
<dbReference type="SUPFAM" id="SSF50621">
    <property type="entry name" value="Alanine racemase C-terminal domain-like"/>
    <property type="match status" value="1"/>
</dbReference>
<dbReference type="SUPFAM" id="SSF51419">
    <property type="entry name" value="PLP-binding barrel"/>
    <property type="match status" value="1"/>
</dbReference>
<dbReference type="PROSITE" id="PS00395">
    <property type="entry name" value="ALANINE_RACEMASE"/>
    <property type="match status" value="1"/>
</dbReference>
<sequence length="367" mass="39959">MKASPHRPTKALIHLGAIRQNIQQMGAHIPQGTLKWAVVKANAYGHGAVAVAKAIQDDVDGFCVSNIDEAIELRQAGLSKPILILGVSEIEAVALAKEYDFTLTVAGLEWIQALLDKEVDLTGLTVHLKIDSGMGRIGFREVSEVEQAQDLLQKHGVCVEGIFTHFATADEESDDYFNAQLERFKTILASMKEVPELVHASNSATTLWHVETIFNAVRMGDAMYGLNPSGAVLDLPYDLIPALTLESALVHVKTVPAGACMGYGATYQADSEQVIATVPIGYADGWTRDMQNFSVLVDGQACPIVGRVSMDQITIRLPKLYPLGTKVTLIGSNGDKEITATQVATYRVTINYEVVCLLSDRIPREYY</sequence>
<name>ALR_STRP7</name>
<reference key="1">
    <citation type="journal article" date="2010" name="Genome Biol.">
        <title>Structure and dynamics of the pan-genome of Streptococcus pneumoniae and closely related species.</title>
        <authorList>
            <person name="Donati C."/>
            <person name="Hiller N.L."/>
            <person name="Tettelin H."/>
            <person name="Muzzi A."/>
            <person name="Croucher N.J."/>
            <person name="Angiuoli S.V."/>
            <person name="Oggioni M."/>
            <person name="Dunning Hotopp J.C."/>
            <person name="Hu F.Z."/>
            <person name="Riley D.R."/>
            <person name="Covacci A."/>
            <person name="Mitchell T.J."/>
            <person name="Bentley S.D."/>
            <person name="Kilian M."/>
            <person name="Ehrlich G.D."/>
            <person name="Rappuoli R."/>
            <person name="Moxon E.R."/>
            <person name="Masignani V."/>
        </authorList>
    </citation>
    <scope>NUCLEOTIDE SEQUENCE [LARGE SCALE GENOMIC DNA]</scope>
    <source>
        <strain>70585</strain>
    </source>
</reference>
<feature type="chain" id="PRO_1000164628" description="Alanine racemase">
    <location>
        <begin position="1"/>
        <end position="367"/>
    </location>
</feature>
<feature type="active site" description="Proton acceptor; specific for D-alanine" evidence="1">
    <location>
        <position position="40"/>
    </location>
</feature>
<feature type="active site" description="Proton acceptor; specific for L-alanine" evidence="1">
    <location>
        <position position="263"/>
    </location>
</feature>
<feature type="binding site" evidence="1">
    <location>
        <position position="136"/>
    </location>
    <ligand>
        <name>substrate</name>
    </ligand>
</feature>
<feature type="binding site" evidence="1">
    <location>
        <position position="310"/>
    </location>
    <ligand>
        <name>substrate</name>
    </ligand>
</feature>
<feature type="modified residue" description="N6-(pyridoxal phosphate)lysine" evidence="1">
    <location>
        <position position="40"/>
    </location>
</feature>
<keyword id="KW-0413">Isomerase</keyword>
<keyword id="KW-0663">Pyridoxal phosphate</keyword>